<dbReference type="EMBL" id="BX571856">
    <property type="protein sequence ID" value="CAG41189.1"/>
    <property type="molecule type" value="Genomic_DNA"/>
</dbReference>
<dbReference type="RefSeq" id="WP_000808968.1">
    <property type="nucleotide sequence ID" value="NC_002952.2"/>
</dbReference>
<dbReference type="SMR" id="Q6GEV5"/>
<dbReference type="KEGG" id="sar:SAR2208"/>
<dbReference type="HOGENOM" id="CLU_114306_2_2_9"/>
<dbReference type="Proteomes" id="UP000000596">
    <property type="component" value="Chromosome"/>
</dbReference>
<dbReference type="GO" id="GO:1990904">
    <property type="term" value="C:ribonucleoprotein complex"/>
    <property type="evidence" value="ECO:0007669"/>
    <property type="project" value="UniProtKB-KW"/>
</dbReference>
<dbReference type="GO" id="GO:0005840">
    <property type="term" value="C:ribosome"/>
    <property type="evidence" value="ECO:0007669"/>
    <property type="project" value="UniProtKB-KW"/>
</dbReference>
<dbReference type="GO" id="GO:0003735">
    <property type="term" value="F:structural constituent of ribosome"/>
    <property type="evidence" value="ECO:0007669"/>
    <property type="project" value="InterPro"/>
</dbReference>
<dbReference type="GO" id="GO:0006412">
    <property type="term" value="P:translation"/>
    <property type="evidence" value="ECO:0007669"/>
    <property type="project" value="UniProtKB-UniRule"/>
</dbReference>
<dbReference type="Gene3D" id="4.10.830.30">
    <property type="entry name" value="Ribosomal protein L31"/>
    <property type="match status" value="1"/>
</dbReference>
<dbReference type="HAMAP" id="MF_00502">
    <property type="entry name" value="Ribosomal_bL31_2"/>
    <property type="match status" value="1"/>
</dbReference>
<dbReference type="InterPro" id="IPR034704">
    <property type="entry name" value="Ribosomal_bL28/bL31-like_sf"/>
</dbReference>
<dbReference type="InterPro" id="IPR002150">
    <property type="entry name" value="Ribosomal_bL31"/>
</dbReference>
<dbReference type="InterPro" id="IPR027493">
    <property type="entry name" value="Ribosomal_bL31_B"/>
</dbReference>
<dbReference type="InterPro" id="IPR042105">
    <property type="entry name" value="Ribosomal_bL31_sf"/>
</dbReference>
<dbReference type="NCBIfam" id="TIGR00105">
    <property type="entry name" value="L31"/>
    <property type="match status" value="1"/>
</dbReference>
<dbReference type="NCBIfam" id="NF002462">
    <property type="entry name" value="PRK01678.1"/>
    <property type="match status" value="1"/>
</dbReference>
<dbReference type="PANTHER" id="PTHR33280">
    <property type="entry name" value="50S RIBOSOMAL PROTEIN L31, CHLOROPLASTIC"/>
    <property type="match status" value="1"/>
</dbReference>
<dbReference type="PANTHER" id="PTHR33280:SF1">
    <property type="entry name" value="LARGE RIBOSOMAL SUBUNIT PROTEIN BL31C"/>
    <property type="match status" value="1"/>
</dbReference>
<dbReference type="Pfam" id="PF01197">
    <property type="entry name" value="Ribosomal_L31"/>
    <property type="match status" value="1"/>
</dbReference>
<dbReference type="PRINTS" id="PR01249">
    <property type="entry name" value="RIBOSOMALL31"/>
</dbReference>
<dbReference type="SUPFAM" id="SSF143800">
    <property type="entry name" value="L28p-like"/>
    <property type="match status" value="1"/>
</dbReference>
<dbReference type="PROSITE" id="PS01143">
    <property type="entry name" value="RIBOSOMAL_L31"/>
    <property type="match status" value="1"/>
</dbReference>
<sequence length="84" mass="9723">MKQGIHPEYHQVIFLDTTTNFKFLSGSTKTSSEMMEWEDGKEYPVIRLDISSDSHPFYTGRQKFAAADGRVERFNKKFGLKSNN</sequence>
<evidence type="ECO:0000255" key="1">
    <source>
        <dbReference type="HAMAP-Rule" id="MF_00502"/>
    </source>
</evidence>
<evidence type="ECO:0000305" key="2"/>
<proteinExistence type="inferred from homology"/>
<gene>
    <name evidence="1" type="primary">rpmE2</name>
    <name type="synonym">rpmE</name>
    <name type="ordered locus">SAR2208</name>
</gene>
<feature type="chain" id="PRO_0000173258" description="Large ribosomal subunit protein bL31B">
    <location>
        <begin position="1"/>
        <end position="84"/>
    </location>
</feature>
<accession>Q6GEV5</accession>
<name>RL31B_STAAR</name>
<protein>
    <recommendedName>
        <fullName evidence="1">Large ribosomal subunit protein bL31B</fullName>
    </recommendedName>
    <alternativeName>
        <fullName evidence="2">50S ribosomal protein L31 type B</fullName>
    </alternativeName>
</protein>
<comment type="subunit">
    <text evidence="1">Part of the 50S ribosomal subunit.</text>
</comment>
<comment type="similarity">
    <text evidence="1">Belongs to the bacterial ribosomal protein bL31 family. Type B subfamily.</text>
</comment>
<reference key="1">
    <citation type="journal article" date="2004" name="Proc. Natl. Acad. Sci. U.S.A.">
        <title>Complete genomes of two clinical Staphylococcus aureus strains: evidence for the rapid evolution of virulence and drug resistance.</title>
        <authorList>
            <person name="Holden M.T.G."/>
            <person name="Feil E.J."/>
            <person name="Lindsay J.A."/>
            <person name="Peacock S.J."/>
            <person name="Day N.P.J."/>
            <person name="Enright M.C."/>
            <person name="Foster T.J."/>
            <person name="Moore C.E."/>
            <person name="Hurst L."/>
            <person name="Atkin R."/>
            <person name="Barron A."/>
            <person name="Bason N."/>
            <person name="Bentley S.D."/>
            <person name="Chillingworth C."/>
            <person name="Chillingworth T."/>
            <person name="Churcher C."/>
            <person name="Clark L."/>
            <person name="Corton C."/>
            <person name="Cronin A."/>
            <person name="Doggett J."/>
            <person name="Dowd L."/>
            <person name="Feltwell T."/>
            <person name="Hance Z."/>
            <person name="Harris B."/>
            <person name="Hauser H."/>
            <person name="Holroyd S."/>
            <person name="Jagels K."/>
            <person name="James K.D."/>
            <person name="Lennard N."/>
            <person name="Line A."/>
            <person name="Mayes R."/>
            <person name="Moule S."/>
            <person name="Mungall K."/>
            <person name="Ormond D."/>
            <person name="Quail M.A."/>
            <person name="Rabbinowitsch E."/>
            <person name="Rutherford K.M."/>
            <person name="Sanders M."/>
            <person name="Sharp S."/>
            <person name="Simmonds M."/>
            <person name="Stevens K."/>
            <person name="Whitehead S."/>
            <person name="Barrell B.G."/>
            <person name="Spratt B.G."/>
            <person name="Parkhill J."/>
        </authorList>
    </citation>
    <scope>NUCLEOTIDE SEQUENCE [LARGE SCALE GENOMIC DNA]</scope>
    <source>
        <strain>MRSA252</strain>
    </source>
</reference>
<keyword id="KW-0687">Ribonucleoprotein</keyword>
<keyword id="KW-0689">Ribosomal protein</keyword>
<organism>
    <name type="scientific">Staphylococcus aureus (strain MRSA252)</name>
    <dbReference type="NCBI Taxonomy" id="282458"/>
    <lineage>
        <taxon>Bacteria</taxon>
        <taxon>Bacillati</taxon>
        <taxon>Bacillota</taxon>
        <taxon>Bacilli</taxon>
        <taxon>Bacillales</taxon>
        <taxon>Staphylococcaceae</taxon>
        <taxon>Staphylococcus</taxon>
    </lineage>
</organism>